<sequence length="489" mass="53672">MGNDKEKYSKLRNIIPEMRRVKHIYFVGIGGAGMGGIAEVLVNEGYRLSGSDIAENAVTQRLASLGAKIHLGHKEEQVHGADVVVVSTAIHADNPELLEAQALRIPVVRRAEMLAELMRYRHGVAVAGTHGKTTTTSLIASVYGQAERDPTFVIGGLLNSAGTNARLGNSRYLIAEADESDASFLHLQPMVSVITNIEADHMDTYEGDFERLKSTFIDFLHNLPFYGIAVMCIDDPVVRELLPSVGRKIVTYGFSEDADVQALNFVQDGYRSRFTLRRTGVEDVEVMVNLPGEHNVLNALAAIAVASEDEIEDEAIIQALADFEGIGRRFEQLGCFDTDRGEVVLVDDYGHHPSEVAATIKAAKLGWPEKRLVMIYQPHRYSRTRDLYEDFVEVLSQVDCLLLLDVYSAGEAAIPGADSRALCRSIRLRGQLDPIFVADQEQLLTLLPDVLQEGDLLLTQGAGNIGALARQLAQNRLGFESTNNDSNRG</sequence>
<protein>
    <recommendedName>
        <fullName evidence="1">UDP-N-acetylmuramate--L-alanine ligase</fullName>
        <ecNumber evidence="1">6.3.2.8</ecNumber>
    </recommendedName>
    <alternativeName>
        <fullName evidence="1">UDP-N-acetylmuramoyl-L-alanine synthetase</fullName>
    </alternativeName>
</protein>
<keyword id="KW-0067">ATP-binding</keyword>
<keyword id="KW-0131">Cell cycle</keyword>
<keyword id="KW-0132">Cell division</keyword>
<keyword id="KW-0133">Cell shape</keyword>
<keyword id="KW-0961">Cell wall biogenesis/degradation</keyword>
<keyword id="KW-0963">Cytoplasm</keyword>
<keyword id="KW-0436">Ligase</keyword>
<keyword id="KW-0547">Nucleotide-binding</keyword>
<keyword id="KW-0573">Peptidoglycan synthesis</keyword>
<keyword id="KW-1185">Reference proteome</keyword>
<gene>
    <name evidence="1" type="primary">murC</name>
    <name type="ordered locus">Swoo_4532</name>
</gene>
<evidence type="ECO:0000255" key="1">
    <source>
        <dbReference type="HAMAP-Rule" id="MF_00046"/>
    </source>
</evidence>
<name>MURC_SHEWM</name>
<proteinExistence type="inferred from homology"/>
<dbReference type="EC" id="6.3.2.8" evidence="1"/>
<dbReference type="EMBL" id="CP000961">
    <property type="protein sequence ID" value="ACA88782.1"/>
    <property type="molecule type" value="Genomic_DNA"/>
</dbReference>
<dbReference type="RefSeq" id="WP_012327108.1">
    <property type="nucleotide sequence ID" value="NC_010506.1"/>
</dbReference>
<dbReference type="SMR" id="B1KKX6"/>
<dbReference type="STRING" id="392500.Swoo_4532"/>
<dbReference type="KEGG" id="swd:Swoo_4532"/>
<dbReference type="eggNOG" id="COG0773">
    <property type="taxonomic scope" value="Bacteria"/>
</dbReference>
<dbReference type="HOGENOM" id="CLU_028104_2_2_6"/>
<dbReference type="UniPathway" id="UPA00219"/>
<dbReference type="Proteomes" id="UP000002168">
    <property type="component" value="Chromosome"/>
</dbReference>
<dbReference type="GO" id="GO:0005737">
    <property type="term" value="C:cytoplasm"/>
    <property type="evidence" value="ECO:0007669"/>
    <property type="project" value="UniProtKB-SubCell"/>
</dbReference>
<dbReference type="GO" id="GO:0005524">
    <property type="term" value="F:ATP binding"/>
    <property type="evidence" value="ECO:0007669"/>
    <property type="project" value="UniProtKB-UniRule"/>
</dbReference>
<dbReference type="GO" id="GO:0008763">
    <property type="term" value="F:UDP-N-acetylmuramate-L-alanine ligase activity"/>
    <property type="evidence" value="ECO:0007669"/>
    <property type="project" value="UniProtKB-UniRule"/>
</dbReference>
<dbReference type="GO" id="GO:0051301">
    <property type="term" value="P:cell division"/>
    <property type="evidence" value="ECO:0007669"/>
    <property type="project" value="UniProtKB-KW"/>
</dbReference>
<dbReference type="GO" id="GO:0071555">
    <property type="term" value="P:cell wall organization"/>
    <property type="evidence" value="ECO:0007669"/>
    <property type="project" value="UniProtKB-KW"/>
</dbReference>
<dbReference type="GO" id="GO:0009252">
    <property type="term" value="P:peptidoglycan biosynthetic process"/>
    <property type="evidence" value="ECO:0007669"/>
    <property type="project" value="UniProtKB-UniRule"/>
</dbReference>
<dbReference type="GO" id="GO:0008360">
    <property type="term" value="P:regulation of cell shape"/>
    <property type="evidence" value="ECO:0007669"/>
    <property type="project" value="UniProtKB-KW"/>
</dbReference>
<dbReference type="FunFam" id="3.40.1190.10:FF:000001">
    <property type="entry name" value="UDP-N-acetylmuramate--L-alanine ligase"/>
    <property type="match status" value="1"/>
</dbReference>
<dbReference type="FunFam" id="3.40.50.720:FF:000046">
    <property type="entry name" value="UDP-N-acetylmuramate--L-alanine ligase"/>
    <property type="match status" value="1"/>
</dbReference>
<dbReference type="Gene3D" id="3.90.190.20">
    <property type="entry name" value="Mur ligase, C-terminal domain"/>
    <property type="match status" value="1"/>
</dbReference>
<dbReference type="Gene3D" id="3.40.1190.10">
    <property type="entry name" value="Mur-like, catalytic domain"/>
    <property type="match status" value="1"/>
</dbReference>
<dbReference type="Gene3D" id="3.40.50.720">
    <property type="entry name" value="NAD(P)-binding Rossmann-like Domain"/>
    <property type="match status" value="1"/>
</dbReference>
<dbReference type="HAMAP" id="MF_00046">
    <property type="entry name" value="MurC"/>
    <property type="match status" value="1"/>
</dbReference>
<dbReference type="InterPro" id="IPR036565">
    <property type="entry name" value="Mur-like_cat_sf"/>
</dbReference>
<dbReference type="InterPro" id="IPR004101">
    <property type="entry name" value="Mur_ligase_C"/>
</dbReference>
<dbReference type="InterPro" id="IPR036615">
    <property type="entry name" value="Mur_ligase_C_dom_sf"/>
</dbReference>
<dbReference type="InterPro" id="IPR013221">
    <property type="entry name" value="Mur_ligase_cen"/>
</dbReference>
<dbReference type="InterPro" id="IPR000713">
    <property type="entry name" value="Mur_ligase_N"/>
</dbReference>
<dbReference type="InterPro" id="IPR050061">
    <property type="entry name" value="MurCDEF_pg_biosynth"/>
</dbReference>
<dbReference type="InterPro" id="IPR005758">
    <property type="entry name" value="UDP-N-AcMur_Ala_ligase_MurC"/>
</dbReference>
<dbReference type="NCBIfam" id="TIGR01082">
    <property type="entry name" value="murC"/>
    <property type="match status" value="1"/>
</dbReference>
<dbReference type="PANTHER" id="PTHR43445:SF3">
    <property type="entry name" value="UDP-N-ACETYLMURAMATE--L-ALANINE LIGASE"/>
    <property type="match status" value="1"/>
</dbReference>
<dbReference type="PANTHER" id="PTHR43445">
    <property type="entry name" value="UDP-N-ACETYLMURAMATE--L-ALANINE LIGASE-RELATED"/>
    <property type="match status" value="1"/>
</dbReference>
<dbReference type="Pfam" id="PF01225">
    <property type="entry name" value="Mur_ligase"/>
    <property type="match status" value="1"/>
</dbReference>
<dbReference type="Pfam" id="PF02875">
    <property type="entry name" value="Mur_ligase_C"/>
    <property type="match status" value="1"/>
</dbReference>
<dbReference type="Pfam" id="PF08245">
    <property type="entry name" value="Mur_ligase_M"/>
    <property type="match status" value="1"/>
</dbReference>
<dbReference type="SUPFAM" id="SSF51984">
    <property type="entry name" value="MurCD N-terminal domain"/>
    <property type="match status" value="1"/>
</dbReference>
<dbReference type="SUPFAM" id="SSF53623">
    <property type="entry name" value="MurD-like peptide ligases, catalytic domain"/>
    <property type="match status" value="1"/>
</dbReference>
<dbReference type="SUPFAM" id="SSF53244">
    <property type="entry name" value="MurD-like peptide ligases, peptide-binding domain"/>
    <property type="match status" value="1"/>
</dbReference>
<reference key="1">
    <citation type="submission" date="2008-02" db="EMBL/GenBank/DDBJ databases">
        <title>Complete sequence of Shewanella woodyi ATCC 51908.</title>
        <authorList>
            <consortium name="US DOE Joint Genome Institute"/>
            <person name="Copeland A."/>
            <person name="Lucas S."/>
            <person name="Lapidus A."/>
            <person name="Glavina del Rio T."/>
            <person name="Dalin E."/>
            <person name="Tice H."/>
            <person name="Bruce D."/>
            <person name="Goodwin L."/>
            <person name="Pitluck S."/>
            <person name="Sims D."/>
            <person name="Brettin T."/>
            <person name="Detter J.C."/>
            <person name="Han C."/>
            <person name="Kuske C.R."/>
            <person name="Schmutz J."/>
            <person name="Larimer F."/>
            <person name="Land M."/>
            <person name="Hauser L."/>
            <person name="Kyrpides N."/>
            <person name="Lykidis A."/>
            <person name="Zhao J.-S."/>
            <person name="Richardson P."/>
        </authorList>
    </citation>
    <scope>NUCLEOTIDE SEQUENCE [LARGE SCALE GENOMIC DNA]</scope>
    <source>
        <strain>ATCC 51908 / MS32</strain>
    </source>
</reference>
<accession>B1KKX6</accession>
<organism>
    <name type="scientific">Shewanella woodyi (strain ATCC 51908 / MS32)</name>
    <dbReference type="NCBI Taxonomy" id="392500"/>
    <lineage>
        <taxon>Bacteria</taxon>
        <taxon>Pseudomonadati</taxon>
        <taxon>Pseudomonadota</taxon>
        <taxon>Gammaproteobacteria</taxon>
        <taxon>Alteromonadales</taxon>
        <taxon>Shewanellaceae</taxon>
        <taxon>Shewanella</taxon>
    </lineage>
</organism>
<comment type="function">
    <text evidence="1">Cell wall formation.</text>
</comment>
<comment type="catalytic activity">
    <reaction evidence="1">
        <text>UDP-N-acetyl-alpha-D-muramate + L-alanine + ATP = UDP-N-acetyl-alpha-D-muramoyl-L-alanine + ADP + phosphate + H(+)</text>
        <dbReference type="Rhea" id="RHEA:23372"/>
        <dbReference type="ChEBI" id="CHEBI:15378"/>
        <dbReference type="ChEBI" id="CHEBI:30616"/>
        <dbReference type="ChEBI" id="CHEBI:43474"/>
        <dbReference type="ChEBI" id="CHEBI:57972"/>
        <dbReference type="ChEBI" id="CHEBI:70757"/>
        <dbReference type="ChEBI" id="CHEBI:83898"/>
        <dbReference type="ChEBI" id="CHEBI:456216"/>
        <dbReference type="EC" id="6.3.2.8"/>
    </reaction>
</comment>
<comment type="pathway">
    <text evidence="1">Cell wall biogenesis; peptidoglycan biosynthesis.</text>
</comment>
<comment type="subcellular location">
    <subcellularLocation>
        <location evidence="1">Cytoplasm</location>
    </subcellularLocation>
</comment>
<comment type="similarity">
    <text evidence="1">Belongs to the MurCDEF family.</text>
</comment>
<feature type="chain" id="PRO_1000091136" description="UDP-N-acetylmuramate--L-alanine ligase">
    <location>
        <begin position="1"/>
        <end position="489"/>
    </location>
</feature>
<feature type="binding site" evidence="1">
    <location>
        <begin position="128"/>
        <end position="134"/>
    </location>
    <ligand>
        <name>ATP</name>
        <dbReference type="ChEBI" id="CHEBI:30616"/>
    </ligand>
</feature>